<proteinExistence type="inferred from homology"/>
<evidence type="ECO:0000250" key="1"/>
<evidence type="ECO:0000305" key="2"/>
<name>RR19_PEA</name>
<reference key="1">
    <citation type="journal article" date="1991" name="Plant Mol. Biol.">
        <title>Nucleotide sequence and expression of the ribosomal protein L2 gene in pea chloroplasts.</title>
        <authorList>
            <person name="Nagano Y."/>
            <person name="Ishikawa H."/>
            <person name="Matsuno R."/>
            <person name="Sasaki Y."/>
        </authorList>
    </citation>
    <scope>NUCLEOTIDE SEQUENCE [GENOMIC DNA]</scope>
    <source>
        <strain>cv. Alaska</strain>
    </source>
</reference>
<feature type="initiator methionine" description="Removed" evidence="1">
    <location>
        <position position="1"/>
    </location>
</feature>
<feature type="chain" id="PRO_0000129979" description="Small ribosomal subunit protein uS19c">
    <location>
        <begin position="2"/>
        <end position="92"/>
    </location>
</feature>
<keyword id="KW-0150">Chloroplast</keyword>
<keyword id="KW-0934">Plastid</keyword>
<keyword id="KW-0687">Ribonucleoprotein</keyword>
<keyword id="KW-0689">Ribosomal protein</keyword>
<keyword id="KW-0694">RNA-binding</keyword>
<keyword id="KW-0699">rRNA-binding</keyword>
<organism>
    <name type="scientific">Pisum sativum</name>
    <name type="common">Garden pea</name>
    <name type="synonym">Lathyrus oleraceus</name>
    <dbReference type="NCBI Taxonomy" id="3888"/>
    <lineage>
        <taxon>Eukaryota</taxon>
        <taxon>Viridiplantae</taxon>
        <taxon>Streptophyta</taxon>
        <taxon>Embryophyta</taxon>
        <taxon>Tracheophyta</taxon>
        <taxon>Spermatophyta</taxon>
        <taxon>Magnoliopsida</taxon>
        <taxon>eudicotyledons</taxon>
        <taxon>Gunneridae</taxon>
        <taxon>Pentapetalae</taxon>
        <taxon>rosids</taxon>
        <taxon>fabids</taxon>
        <taxon>Fabales</taxon>
        <taxon>Fabaceae</taxon>
        <taxon>Papilionoideae</taxon>
        <taxon>50 kb inversion clade</taxon>
        <taxon>NPAAA clade</taxon>
        <taxon>Hologalegina</taxon>
        <taxon>IRL clade</taxon>
        <taxon>Fabeae</taxon>
        <taxon>Pisum</taxon>
    </lineage>
</organism>
<accession>P31162</accession>
<geneLocation type="chloroplast"/>
<sequence>MTRSRKKNPFVANHLLKKIKKLNTKGEKAIIKTWSRKSTIIPIMIGHTIAIHNGKEHLPVYITDRMVGHKLGEFSPTLNFGGFAKNDNKSRR</sequence>
<comment type="function">
    <text evidence="1">Protein S19 forms a complex with S13 that binds strongly to the 16S ribosomal RNA.</text>
</comment>
<comment type="subcellular location">
    <subcellularLocation>
        <location>Plastid</location>
        <location>Chloroplast</location>
    </subcellularLocation>
</comment>
<comment type="similarity">
    <text evidence="2">Belongs to the universal ribosomal protein uS19 family.</text>
</comment>
<dbReference type="EMBL" id="X59015">
    <property type="protein sequence ID" value="CAA41757.1"/>
    <property type="molecule type" value="Genomic_DNA"/>
</dbReference>
<dbReference type="PIR" id="S17443">
    <property type="entry name" value="S17443"/>
</dbReference>
<dbReference type="RefSeq" id="YP_003587590.1">
    <property type="nucleotide sequence ID" value="NC_014057.1"/>
</dbReference>
<dbReference type="SMR" id="P31162"/>
<dbReference type="GeneID" id="9073145"/>
<dbReference type="GO" id="GO:0009507">
    <property type="term" value="C:chloroplast"/>
    <property type="evidence" value="ECO:0007669"/>
    <property type="project" value="UniProtKB-SubCell"/>
</dbReference>
<dbReference type="GO" id="GO:0005763">
    <property type="term" value="C:mitochondrial small ribosomal subunit"/>
    <property type="evidence" value="ECO:0007669"/>
    <property type="project" value="TreeGrafter"/>
</dbReference>
<dbReference type="GO" id="GO:0019843">
    <property type="term" value="F:rRNA binding"/>
    <property type="evidence" value="ECO:0007669"/>
    <property type="project" value="UniProtKB-UniRule"/>
</dbReference>
<dbReference type="GO" id="GO:0003735">
    <property type="term" value="F:structural constituent of ribosome"/>
    <property type="evidence" value="ECO:0007669"/>
    <property type="project" value="InterPro"/>
</dbReference>
<dbReference type="GO" id="GO:0000028">
    <property type="term" value="P:ribosomal small subunit assembly"/>
    <property type="evidence" value="ECO:0007669"/>
    <property type="project" value="TreeGrafter"/>
</dbReference>
<dbReference type="GO" id="GO:0006412">
    <property type="term" value="P:translation"/>
    <property type="evidence" value="ECO:0007669"/>
    <property type="project" value="UniProtKB-UniRule"/>
</dbReference>
<dbReference type="FunFam" id="3.30.860.10:FF:000001">
    <property type="entry name" value="30S ribosomal protein S19"/>
    <property type="match status" value="1"/>
</dbReference>
<dbReference type="Gene3D" id="3.30.860.10">
    <property type="entry name" value="30s Ribosomal Protein S19, Chain A"/>
    <property type="match status" value="1"/>
</dbReference>
<dbReference type="HAMAP" id="MF_00531">
    <property type="entry name" value="Ribosomal_uS19"/>
    <property type="match status" value="1"/>
</dbReference>
<dbReference type="InterPro" id="IPR002222">
    <property type="entry name" value="Ribosomal_uS19"/>
</dbReference>
<dbReference type="InterPro" id="IPR005732">
    <property type="entry name" value="Ribosomal_uS19_bac-type"/>
</dbReference>
<dbReference type="InterPro" id="IPR020934">
    <property type="entry name" value="Ribosomal_uS19_CS"/>
</dbReference>
<dbReference type="InterPro" id="IPR023575">
    <property type="entry name" value="Ribosomal_uS19_SF"/>
</dbReference>
<dbReference type="NCBIfam" id="TIGR01050">
    <property type="entry name" value="rpsS_bact"/>
    <property type="match status" value="1"/>
</dbReference>
<dbReference type="PANTHER" id="PTHR11880">
    <property type="entry name" value="RIBOSOMAL PROTEIN S19P FAMILY MEMBER"/>
    <property type="match status" value="1"/>
</dbReference>
<dbReference type="PANTHER" id="PTHR11880:SF8">
    <property type="entry name" value="SMALL RIBOSOMAL SUBUNIT PROTEIN US19M"/>
    <property type="match status" value="1"/>
</dbReference>
<dbReference type="Pfam" id="PF00203">
    <property type="entry name" value="Ribosomal_S19"/>
    <property type="match status" value="1"/>
</dbReference>
<dbReference type="PIRSF" id="PIRSF002144">
    <property type="entry name" value="Ribosomal_S19"/>
    <property type="match status" value="1"/>
</dbReference>
<dbReference type="PRINTS" id="PR00975">
    <property type="entry name" value="RIBOSOMALS19"/>
</dbReference>
<dbReference type="SUPFAM" id="SSF54570">
    <property type="entry name" value="Ribosomal protein S19"/>
    <property type="match status" value="1"/>
</dbReference>
<dbReference type="PROSITE" id="PS00323">
    <property type="entry name" value="RIBOSOMAL_S19"/>
    <property type="match status" value="1"/>
</dbReference>
<gene>
    <name type="primary">rps19</name>
</gene>
<protein>
    <recommendedName>
        <fullName evidence="2">Small ribosomal subunit protein uS19c</fullName>
    </recommendedName>
    <alternativeName>
        <fullName>30S ribosomal protein S19, chloroplastic</fullName>
    </alternativeName>
</protein>